<reference key="1">
    <citation type="journal article" date="1990" name="J. Virol.">
        <title>Sequence variability of bovine leukemia virus env gene and its relevance to the structure and antigenicity of the glycoproteins.</title>
        <authorList>
            <person name="Mamoun R.Z."/>
            <person name="Morisson M."/>
            <person name="Rebeyrotte N."/>
            <person name="Busetta B."/>
            <person name="Couez D."/>
            <person name="Kettmann R."/>
            <person name="Hospital M."/>
            <person name="Guillemain B."/>
        </authorList>
    </citation>
    <scope>NUCLEOTIDE SEQUENCE [GENOMIC RNA]</scope>
</reference>
<keyword id="KW-0165">Cleavage on pair of basic residues</keyword>
<keyword id="KW-0175">Coiled coil</keyword>
<keyword id="KW-1015">Disulfide bond</keyword>
<keyword id="KW-1169">Fusion of virus membrane with host cell membrane</keyword>
<keyword id="KW-1168">Fusion of virus membrane with host membrane</keyword>
<keyword id="KW-0325">Glycoprotein</keyword>
<keyword id="KW-1032">Host cell membrane</keyword>
<keyword id="KW-1043">Host membrane</keyword>
<keyword id="KW-0945">Host-virus interaction</keyword>
<keyword id="KW-0449">Lipoprotein</keyword>
<keyword id="KW-0472">Membrane</keyword>
<keyword id="KW-0564">Palmitate</keyword>
<keyword id="KW-0732">Signal</keyword>
<keyword id="KW-0812">Transmembrane</keyword>
<keyword id="KW-1133">Transmembrane helix</keyword>
<keyword id="KW-1161">Viral attachment to host cell</keyword>
<keyword id="KW-0261">Viral envelope protein</keyword>
<keyword id="KW-1162">Viral penetration into host cytoplasm</keyword>
<keyword id="KW-0946">Virion</keyword>
<keyword id="KW-1160">Virus entry into host cell</keyword>
<sequence>MPKERRSRRRPQPIIRWVSLTLTLLSLCQPIQTWRCSLSLGNQQWMTTYNQEAKFSIAIDQILEAHNQSPFCPRSPRYTLDFVNGYPKIYWPPPQGRRRFGARAMVTYDCEPRCPYVGADHFDCPHWDNASQADQGSFYVNHQILFLHLKQCHGIFTLTWEIWGYDPLITFSLHKIPDPPQPDFPQLNSDWVPSVRSWALLLNQTARAFPDCAICWEPSPPWAPEILVYNKTISNSGPGLALPDAQIFWVNTSLFNTTQGWHHPSQRLLFNVSQGNALLLPPISLVNLSTASSAPPTRVRRSPAAALTLGLALSVGLTGINVAVSALSHQRLTSLIHVLEQDQQRLITAINQTHYNLLNVASVVAQNRRGLDWLYIRLGFQSLCPTINEPCCFLRIQNDSIIRLGDLQPLSQRVSTDWQWPWNWDLGLTAWVRETIHSVLSLFLLALFLLFLAPCLIKCLTSRLLKLLRQAPHFPEISLAPKPDSDYQALLPSAPEIYSHLSPTKPDYINLRPCP</sequence>
<dbReference type="EMBL" id="M35240">
    <property type="protein sequence ID" value="AAA42791.1"/>
    <property type="molecule type" value="Genomic_RNA"/>
</dbReference>
<dbReference type="SMR" id="P25506"/>
<dbReference type="GlyCosmos" id="P25506">
    <property type="glycosylation" value="9 sites, No reported glycans"/>
</dbReference>
<dbReference type="GO" id="GO:0020002">
    <property type="term" value="C:host cell plasma membrane"/>
    <property type="evidence" value="ECO:0007669"/>
    <property type="project" value="UniProtKB-SubCell"/>
</dbReference>
<dbReference type="GO" id="GO:0016020">
    <property type="term" value="C:membrane"/>
    <property type="evidence" value="ECO:0007669"/>
    <property type="project" value="UniProtKB-KW"/>
</dbReference>
<dbReference type="GO" id="GO:0019031">
    <property type="term" value="C:viral envelope"/>
    <property type="evidence" value="ECO:0007669"/>
    <property type="project" value="UniProtKB-KW"/>
</dbReference>
<dbReference type="GO" id="GO:0055036">
    <property type="term" value="C:virion membrane"/>
    <property type="evidence" value="ECO:0007669"/>
    <property type="project" value="UniProtKB-SubCell"/>
</dbReference>
<dbReference type="GO" id="GO:0019064">
    <property type="term" value="P:fusion of virus membrane with host plasma membrane"/>
    <property type="evidence" value="ECO:0007669"/>
    <property type="project" value="UniProtKB-KW"/>
</dbReference>
<dbReference type="GO" id="GO:0046718">
    <property type="term" value="P:symbiont entry into host cell"/>
    <property type="evidence" value="ECO:0007669"/>
    <property type="project" value="UniProtKB-KW"/>
</dbReference>
<dbReference type="GO" id="GO:0019062">
    <property type="term" value="P:virion attachment to host cell"/>
    <property type="evidence" value="ECO:0007669"/>
    <property type="project" value="UniProtKB-KW"/>
</dbReference>
<dbReference type="Gene3D" id="1.10.287.210">
    <property type="match status" value="1"/>
</dbReference>
<dbReference type="InterPro" id="IPR018154">
    <property type="entry name" value="TLV/ENV_coat_polyprotein"/>
</dbReference>
<dbReference type="PANTHER" id="PTHR10424:SF81">
    <property type="entry name" value="ERVV2 PROTEIN"/>
    <property type="match status" value="1"/>
</dbReference>
<dbReference type="PANTHER" id="PTHR10424">
    <property type="entry name" value="VIRAL ENVELOPE PROTEIN"/>
    <property type="match status" value="1"/>
</dbReference>
<dbReference type="Pfam" id="PF00429">
    <property type="entry name" value="TLV_coat"/>
    <property type="match status" value="1"/>
</dbReference>
<dbReference type="SUPFAM" id="SSF58069">
    <property type="entry name" value="Virus ectodomain"/>
    <property type="match status" value="1"/>
</dbReference>
<evidence type="ECO:0000250" key="1"/>
<evidence type="ECO:0000255" key="2"/>
<proteinExistence type="inferred from homology"/>
<protein>
    <recommendedName>
        <fullName>Envelope glycoprotein</fullName>
    </recommendedName>
    <alternativeName>
        <fullName>Env polyprotein</fullName>
    </alternativeName>
    <component>
        <recommendedName>
            <fullName>Surface protein</fullName>
            <shortName>SU</shortName>
        </recommendedName>
        <alternativeName>
            <fullName>Glycoprotein 51</fullName>
            <shortName>gp51</shortName>
        </alternativeName>
    </component>
    <component>
        <recommendedName>
            <fullName>Transmembrane protein</fullName>
            <shortName>TM</shortName>
        </recommendedName>
        <alternativeName>
            <fullName>Glycoprotein 30</fullName>
            <shortName>gp30</shortName>
        </alternativeName>
    </component>
</protein>
<organism>
    <name type="scientific">Bovine leukemia virus (isolate Belgium LB285)</name>
    <name type="common">BLV</name>
    <dbReference type="NCBI Taxonomy" id="11905"/>
    <lineage>
        <taxon>Viruses</taxon>
        <taxon>Riboviria</taxon>
        <taxon>Pararnavirae</taxon>
        <taxon>Artverviricota</taxon>
        <taxon>Revtraviricetes</taxon>
        <taxon>Ortervirales</taxon>
        <taxon>Retroviridae</taxon>
        <taxon>Orthoretrovirinae</taxon>
        <taxon>Deltaretrovirus</taxon>
        <taxon>Bovine leukemia virus</taxon>
    </lineage>
</organism>
<feature type="signal peptide" evidence="2">
    <location>
        <begin position="1"/>
        <end position="33"/>
    </location>
</feature>
<feature type="chain" id="PRO_0000239554" description="Envelope glycoprotein">
    <location>
        <begin position="34"/>
        <end position="515"/>
    </location>
</feature>
<feature type="chain" id="PRO_0000040695" description="Surface protein" evidence="1">
    <location>
        <begin position="34"/>
        <end position="301"/>
    </location>
</feature>
<feature type="chain" id="PRO_0000040696" description="Transmembrane protein" evidence="1">
    <location>
        <begin position="302"/>
        <end position="515"/>
    </location>
</feature>
<feature type="topological domain" description="Extracellular" evidence="2">
    <location>
        <begin position="34"/>
        <end position="435"/>
    </location>
</feature>
<feature type="transmembrane region" description="Helical" evidence="2">
    <location>
        <begin position="436"/>
        <end position="456"/>
    </location>
</feature>
<feature type="topological domain" description="Cytoplasmic" evidence="2">
    <location>
        <begin position="457"/>
        <end position="515"/>
    </location>
</feature>
<feature type="region of interest" description="Fusion peptide" evidence="2">
    <location>
        <begin position="304"/>
        <end position="324"/>
    </location>
</feature>
<feature type="region of interest" description="Immunosuppression" evidence="1">
    <location>
        <begin position="365"/>
        <end position="381"/>
    </location>
</feature>
<feature type="coiled-coil region" evidence="2">
    <location>
        <begin position="330"/>
        <end position="376"/>
    </location>
</feature>
<feature type="coiled-coil region" evidence="2">
    <location>
        <begin position="388"/>
        <end position="420"/>
    </location>
</feature>
<feature type="short sequence motif" description="CXXC">
    <location>
        <begin position="212"/>
        <end position="215"/>
    </location>
</feature>
<feature type="short sequence motif" description="CX6CC">
    <location>
        <begin position="384"/>
        <end position="392"/>
    </location>
</feature>
<feature type="site" description="Cleavage; by host" evidence="1">
    <location>
        <begin position="301"/>
        <end position="302"/>
    </location>
</feature>
<feature type="lipid moiety-binding region" description="S-palmitoyl cysteine; by host" evidence="1">
    <location>
        <position position="455"/>
    </location>
</feature>
<feature type="glycosylation site" description="N-linked (GlcNAc...) asparagine; by host" evidence="2">
    <location>
        <position position="129"/>
    </location>
</feature>
<feature type="glycosylation site" description="N-linked (GlcNAc...) asparagine; by host" evidence="2">
    <location>
        <position position="203"/>
    </location>
</feature>
<feature type="glycosylation site" description="N-linked (GlcNAc...) asparagine; by host" evidence="2">
    <location>
        <position position="230"/>
    </location>
</feature>
<feature type="glycosylation site" description="N-linked (GlcNAc...) asparagine; by host" evidence="2">
    <location>
        <position position="251"/>
    </location>
</feature>
<feature type="glycosylation site" description="N-linked (GlcNAc...) asparagine; by host" evidence="2">
    <location>
        <position position="256"/>
    </location>
</feature>
<feature type="glycosylation site" description="N-linked (GlcNAc...) asparagine; by host" evidence="2">
    <location>
        <position position="271"/>
    </location>
</feature>
<feature type="glycosylation site" description="N-linked (GlcNAc...) asparagine; by host" evidence="2">
    <location>
        <position position="287"/>
    </location>
</feature>
<feature type="glycosylation site" description="N-linked (GlcNAc...) asparagine; by host" evidence="2">
    <location>
        <position position="351"/>
    </location>
</feature>
<feature type="glycosylation site" description="N-linked (GlcNAc...) asparagine; by host" evidence="2">
    <location>
        <position position="398"/>
    </location>
</feature>
<feature type="disulfide bond" description="Interchain (between SU and TM chains, or C-215 with C-392); in linked form" evidence="1">
    <location>
        <begin position="212"/>
        <end position="392"/>
    </location>
</feature>
<feature type="disulfide bond" evidence="1">
    <location>
        <begin position="212"/>
        <end position="215"/>
    </location>
</feature>
<feature type="disulfide bond" evidence="1">
    <location>
        <begin position="384"/>
        <end position="391"/>
    </location>
</feature>
<comment type="function">
    <text evidence="1">The surface protein (SU) attaches the virus to the host cell by binding to its receptor. This interaction triggers the refolding of the transmembrane protein (TM) and is thought to activate its fusogenic potential by unmasking its fusion peptide. Fusion occurs at the host cell plasma membrane (By similarity).</text>
</comment>
<comment type="function">
    <text evidence="1">The transmembrane protein (TM) acts as a class I viral fusion protein. Under the current model, the protein has at least 3 conformational states: pre-fusion native state, pre-hairpin intermediate state, and post-fusion hairpin state. During viral and target cell membrane fusion, the coiled coil regions (heptad repeats) assume a trimer-of-hairpins structure, positioning the fusion peptide in close proximity to the C-terminal region of the ectodomain. The formation of this structure appears to drive apposition and subsequent fusion of viral and target cell membranes. Membranes fusion leads to delivery of the nucleocapsid into the cytoplasm (By similarity).</text>
</comment>
<comment type="subunit">
    <text evidence="1">The mature envelope protein (Env) consists of a trimer of SU-TM heterodimers attached by a labile interchain disulfide bond.</text>
</comment>
<comment type="subcellular location">
    <molecule>Transmembrane protein</molecule>
    <subcellularLocation>
        <location evidence="1">Virion membrane</location>
        <topology evidence="1">Single-pass type I membrane protein</topology>
    </subcellularLocation>
    <subcellularLocation>
        <location evidence="1">Host cell membrane</location>
        <topology evidence="1">Single-pass type I membrane protein</topology>
    </subcellularLocation>
    <text evidence="1">It is probably concentrated at the site of budding and incorporated into the virions possibly by contacts between the cytoplasmic tail of Env and the N-terminus of Gag.</text>
</comment>
<comment type="subcellular location">
    <molecule>Surface protein</molecule>
    <subcellularLocation>
        <location evidence="1">Virion membrane</location>
        <topology evidence="1">Peripheral membrane protein</topology>
    </subcellularLocation>
    <subcellularLocation>
        <location evidence="1">Host cell membrane</location>
        <topology evidence="1">Peripheral membrane protein</topology>
    </subcellularLocation>
    <text evidence="1">The surface protein is not anchored to the viral envelope, but associates with the extravirion surface through its binding to TM. It is probably concentrated at the site of budding and incorporated into the virions possibly by contacts between the cytoplasmic tail of Env and the N-terminus of Gag (By similarity).</text>
</comment>
<comment type="domain">
    <text evidence="1">The 17 amino acids long immunosuppressive region is present in many retroviral envelope proteins. Synthetic peptides derived from this relatively conserved sequence inhibit immune function in vitro and in vivo (By similarity).</text>
</comment>
<comment type="PTM">
    <text evidence="1">Specific enzymatic cleavages in vivo yield mature proteins. Envelope glycoproteins are synthesized as an inactive precursor that is N-glycosylated and processed likely by host cell furin or by a furin-like protease in the Golgi to yield the mature SU and TM proteins. The cleavage site between SU and TM requires the minimal sequence [KR]-X-[KR]-R (By similarity).</text>
</comment>
<comment type="PTM">
    <text evidence="1">The CXXC motif is highly conserved across a broad range of retroviral envelope proteins. It is thought to participate in the formation of a labile disulfide bond possibly with the CX6CC motif present in the transmembrane protein. Isomerization of the intersubunit disulfide bond to an SU intrachain disulfide bond is thought to occur upon receptor recognition in order to allow membrane fusion (By similarity).</text>
</comment>
<comment type="PTM">
    <text evidence="1">The transmembrane protein is palmitoylated.</text>
</comment>
<accession>P25506</accession>
<organismHost>
    <name type="scientific">Bos taurus</name>
    <name type="common">Bovine</name>
    <dbReference type="NCBI Taxonomy" id="9913"/>
</organismHost>
<gene>
    <name type="primary">env</name>
</gene>
<name>ENV_BLVB2</name>